<proteinExistence type="inferred from homology"/>
<comment type="similarity">
    <text evidence="1">Belongs to the UPF0225 family.</text>
</comment>
<keyword id="KW-1185">Reference proteome</keyword>
<name>Y1039_PSEAE</name>
<accession>Q9I4T5</accession>
<dbReference type="EMBL" id="AE004091">
    <property type="protein sequence ID" value="AAG04428.1"/>
    <property type="molecule type" value="Genomic_DNA"/>
</dbReference>
<dbReference type="PIR" id="G83515">
    <property type="entry name" value="G83515"/>
</dbReference>
<dbReference type="RefSeq" id="NP_249730.1">
    <property type="nucleotide sequence ID" value="NC_002516.2"/>
</dbReference>
<dbReference type="RefSeq" id="WP_003082003.1">
    <property type="nucleotide sequence ID" value="NZ_QZGE01000006.1"/>
</dbReference>
<dbReference type="SMR" id="Q9I4T5"/>
<dbReference type="FunCoup" id="Q9I4T5">
    <property type="interactions" value="33"/>
</dbReference>
<dbReference type="STRING" id="208964.PA1039"/>
<dbReference type="PaxDb" id="208964-PA1039"/>
<dbReference type="DNASU" id="881703"/>
<dbReference type="GeneID" id="881703"/>
<dbReference type="KEGG" id="pae:PA1039"/>
<dbReference type="PATRIC" id="fig|208964.12.peg.1075"/>
<dbReference type="PseudoCAP" id="PA1039"/>
<dbReference type="HOGENOM" id="CLU_099590_0_1_6"/>
<dbReference type="InParanoid" id="Q9I4T5"/>
<dbReference type="OrthoDB" id="21421at2"/>
<dbReference type="PhylomeDB" id="Q9I4T5"/>
<dbReference type="BioCyc" id="PAER208964:G1FZ6-1061-MONOMER"/>
<dbReference type="Proteomes" id="UP000002438">
    <property type="component" value="Chromosome"/>
</dbReference>
<dbReference type="Gene3D" id="3.10.450.50">
    <property type="match status" value="1"/>
</dbReference>
<dbReference type="HAMAP" id="MF_00612">
    <property type="entry name" value="UPF0225"/>
    <property type="match status" value="1"/>
</dbReference>
<dbReference type="InterPro" id="IPR032710">
    <property type="entry name" value="NTF2-like_dom_sf"/>
</dbReference>
<dbReference type="InterPro" id="IPR004027">
    <property type="entry name" value="SEC_C_motif"/>
</dbReference>
<dbReference type="InterPro" id="IPR023006">
    <property type="entry name" value="UPF0225"/>
</dbReference>
<dbReference type="InterPro" id="IPR048469">
    <property type="entry name" value="YchJ-like_M"/>
</dbReference>
<dbReference type="NCBIfam" id="NF001213">
    <property type="entry name" value="PRK00183.1"/>
    <property type="match status" value="1"/>
</dbReference>
<dbReference type="NCBIfam" id="NF002486">
    <property type="entry name" value="PRK01752.1"/>
    <property type="match status" value="1"/>
</dbReference>
<dbReference type="PANTHER" id="PTHR33747:SF1">
    <property type="entry name" value="ADENYLATE CYCLASE-ASSOCIATED CAP C-TERMINAL DOMAIN-CONTAINING PROTEIN"/>
    <property type="match status" value="1"/>
</dbReference>
<dbReference type="PANTHER" id="PTHR33747">
    <property type="entry name" value="UPF0225 PROTEIN SCO1677"/>
    <property type="match status" value="1"/>
</dbReference>
<dbReference type="Pfam" id="PF02810">
    <property type="entry name" value="SEC-C"/>
    <property type="match status" value="2"/>
</dbReference>
<dbReference type="Pfam" id="PF17775">
    <property type="entry name" value="YchJ_M-like"/>
    <property type="match status" value="1"/>
</dbReference>
<dbReference type="SUPFAM" id="SSF54427">
    <property type="entry name" value="NTF2-like"/>
    <property type="match status" value="1"/>
</dbReference>
<dbReference type="SUPFAM" id="SSF103642">
    <property type="entry name" value="Sec-C motif"/>
    <property type="match status" value="1"/>
</dbReference>
<organism>
    <name type="scientific">Pseudomonas aeruginosa (strain ATCC 15692 / DSM 22644 / CIP 104116 / JCM 14847 / LMG 12228 / 1C / PRS 101 / PAO1)</name>
    <dbReference type="NCBI Taxonomy" id="208964"/>
    <lineage>
        <taxon>Bacteria</taxon>
        <taxon>Pseudomonadati</taxon>
        <taxon>Pseudomonadota</taxon>
        <taxon>Gammaproteobacteria</taxon>
        <taxon>Pseudomonadales</taxon>
        <taxon>Pseudomonadaceae</taxon>
        <taxon>Pseudomonas</taxon>
    </lineage>
</organism>
<evidence type="ECO:0000255" key="1">
    <source>
        <dbReference type="HAMAP-Rule" id="MF_00612"/>
    </source>
</evidence>
<reference key="1">
    <citation type="journal article" date="2000" name="Nature">
        <title>Complete genome sequence of Pseudomonas aeruginosa PAO1, an opportunistic pathogen.</title>
        <authorList>
            <person name="Stover C.K."/>
            <person name="Pham X.-Q.T."/>
            <person name="Erwin A.L."/>
            <person name="Mizoguchi S.D."/>
            <person name="Warrener P."/>
            <person name="Hickey M.J."/>
            <person name="Brinkman F.S.L."/>
            <person name="Hufnagle W.O."/>
            <person name="Kowalik D.J."/>
            <person name="Lagrou M."/>
            <person name="Garber R.L."/>
            <person name="Goltry L."/>
            <person name="Tolentino E."/>
            <person name="Westbrock-Wadman S."/>
            <person name="Yuan Y."/>
            <person name="Brody L.L."/>
            <person name="Coulter S.N."/>
            <person name="Folger K.R."/>
            <person name="Kas A."/>
            <person name="Larbig K."/>
            <person name="Lim R.M."/>
            <person name="Smith K.A."/>
            <person name="Spencer D.H."/>
            <person name="Wong G.K.-S."/>
            <person name="Wu Z."/>
            <person name="Paulsen I.T."/>
            <person name="Reizer J."/>
            <person name="Saier M.H. Jr."/>
            <person name="Hancock R.E.W."/>
            <person name="Lory S."/>
            <person name="Olson M.V."/>
        </authorList>
    </citation>
    <scope>NUCLEOTIDE SEQUENCE [LARGE SCALE GENOMIC DNA]</scope>
    <source>
        <strain>ATCC 15692 / DSM 22644 / CIP 104116 / JCM 14847 / LMG 12228 / 1C / PRS 101 / PAO1</strain>
    </source>
</reference>
<protein>
    <recommendedName>
        <fullName evidence="1">UPF0225 protein PA1039</fullName>
    </recommendedName>
</protein>
<feature type="chain" id="PRO_0000071809" description="UPF0225 protein PA1039">
    <location>
        <begin position="1"/>
        <end position="157"/>
    </location>
</feature>
<sequence>MTQPSCPCGSGDPLDDCCGRYHQGHPAPTAEALMRSRYSAYALGLVDYLRDTTLPAQQAGLDLDGIRAWSHGSTWLGLEVENHEVLGGQPEHARVTFVARWHDADGEHAHRECSGFVQRNGRWYFLDPTVALKLGRNDPCPCGAGGKLKKCCGPWIT</sequence>
<gene>
    <name type="ordered locus">PA1039</name>
</gene>